<feature type="initiator methionine" description="Removed" evidence="1">
    <location>
        <position position="1"/>
    </location>
</feature>
<feature type="chain" id="PRO_0000073473" description="Calbindin">
    <location>
        <begin position="2"/>
        <end position="261"/>
    </location>
</feature>
<feature type="domain" description="EF-hand 1" evidence="3">
    <location>
        <begin position="11"/>
        <end position="46"/>
    </location>
</feature>
<feature type="domain" description="EF-hand 2" evidence="3">
    <location>
        <begin position="53"/>
        <end position="88"/>
    </location>
</feature>
<feature type="domain" description="EF-hand 3" evidence="3">
    <location>
        <begin position="98"/>
        <end position="133"/>
    </location>
</feature>
<feature type="domain" description="EF-hand 4" evidence="3">
    <location>
        <begin position="142"/>
        <end position="177"/>
    </location>
</feature>
<feature type="domain" description="EF-hand 5" evidence="3">
    <location>
        <begin position="186"/>
        <end position="221"/>
    </location>
</feature>
<feature type="region of interest" description="Interaction with RANBP9" evidence="2">
    <location>
        <begin position="2"/>
        <end position="7"/>
    </location>
</feature>
<feature type="binding site" evidence="3">
    <location>
        <position position="24"/>
    </location>
    <ligand>
        <name>Ca(2+)</name>
        <dbReference type="ChEBI" id="CHEBI:29108"/>
        <label>1</label>
    </ligand>
</feature>
<feature type="binding site" evidence="3">
    <location>
        <position position="26"/>
    </location>
    <ligand>
        <name>Ca(2+)</name>
        <dbReference type="ChEBI" id="CHEBI:29108"/>
        <label>1</label>
    </ligand>
</feature>
<feature type="binding site" evidence="3">
    <location>
        <position position="28"/>
    </location>
    <ligand>
        <name>Ca(2+)</name>
        <dbReference type="ChEBI" id="CHEBI:29108"/>
        <label>1</label>
    </ligand>
</feature>
<feature type="binding site" evidence="3">
    <location>
        <position position="30"/>
    </location>
    <ligand>
        <name>Ca(2+)</name>
        <dbReference type="ChEBI" id="CHEBI:29108"/>
        <label>1</label>
    </ligand>
</feature>
<feature type="binding site" evidence="3">
    <location>
        <position position="35"/>
    </location>
    <ligand>
        <name>Ca(2+)</name>
        <dbReference type="ChEBI" id="CHEBI:29108"/>
        <label>1</label>
    </ligand>
</feature>
<feature type="binding site" evidence="3">
    <location>
        <position position="111"/>
    </location>
    <ligand>
        <name>Ca(2+)</name>
        <dbReference type="ChEBI" id="CHEBI:29108"/>
        <label>2</label>
    </ligand>
</feature>
<feature type="binding site" evidence="3">
    <location>
        <position position="113"/>
    </location>
    <ligand>
        <name>Ca(2+)</name>
        <dbReference type="ChEBI" id="CHEBI:29108"/>
        <label>2</label>
    </ligand>
</feature>
<feature type="binding site" evidence="3">
    <location>
        <position position="115"/>
    </location>
    <ligand>
        <name>Ca(2+)</name>
        <dbReference type="ChEBI" id="CHEBI:29108"/>
        <label>2</label>
    </ligand>
</feature>
<feature type="binding site" evidence="3">
    <location>
        <position position="122"/>
    </location>
    <ligand>
        <name>Ca(2+)</name>
        <dbReference type="ChEBI" id="CHEBI:29108"/>
        <label>2</label>
    </ligand>
</feature>
<feature type="binding site" evidence="3">
    <location>
        <position position="155"/>
    </location>
    <ligand>
        <name>Ca(2+)</name>
        <dbReference type="ChEBI" id="CHEBI:29108"/>
        <label>3</label>
    </ligand>
</feature>
<feature type="binding site" evidence="3">
    <location>
        <position position="157"/>
    </location>
    <ligand>
        <name>Ca(2+)</name>
        <dbReference type="ChEBI" id="CHEBI:29108"/>
        <label>3</label>
    </ligand>
</feature>
<feature type="binding site" evidence="3">
    <location>
        <position position="159"/>
    </location>
    <ligand>
        <name>Ca(2+)</name>
        <dbReference type="ChEBI" id="CHEBI:29108"/>
        <label>3</label>
    </ligand>
</feature>
<feature type="binding site" evidence="3">
    <location>
        <position position="161"/>
    </location>
    <ligand>
        <name>Ca(2+)</name>
        <dbReference type="ChEBI" id="CHEBI:29108"/>
        <label>3</label>
    </ligand>
</feature>
<feature type="binding site" evidence="3">
    <location>
        <position position="166"/>
    </location>
    <ligand>
        <name>Ca(2+)</name>
        <dbReference type="ChEBI" id="CHEBI:29108"/>
        <label>3</label>
    </ligand>
</feature>
<feature type="binding site" evidence="3">
    <location>
        <position position="199"/>
    </location>
    <ligand>
        <name>Ca(2+)</name>
        <dbReference type="ChEBI" id="CHEBI:29108"/>
        <label>4</label>
    </ligand>
</feature>
<feature type="binding site" evidence="3">
    <location>
        <position position="201"/>
    </location>
    <ligand>
        <name>Ca(2+)</name>
        <dbReference type="ChEBI" id="CHEBI:29108"/>
        <label>4</label>
    </ligand>
</feature>
<feature type="binding site" evidence="3">
    <location>
        <position position="203"/>
    </location>
    <ligand>
        <name>Ca(2+)</name>
        <dbReference type="ChEBI" id="CHEBI:29108"/>
        <label>4</label>
    </ligand>
</feature>
<feature type="binding site" evidence="3">
    <location>
        <position position="205"/>
    </location>
    <ligand>
        <name>Ca(2+)</name>
        <dbReference type="ChEBI" id="CHEBI:29108"/>
        <label>4</label>
    </ligand>
</feature>
<feature type="binding site" evidence="3">
    <location>
        <position position="210"/>
    </location>
    <ligand>
        <name>Ca(2+)</name>
        <dbReference type="ChEBI" id="CHEBI:29108"/>
        <label>4</label>
    </ligand>
</feature>
<feature type="modified residue" description="N-acetylalanine" evidence="1">
    <location>
        <position position="2"/>
    </location>
</feature>
<accession>P12658</accession>
<accession>Q545N6</accession>
<comment type="function">
    <text>Buffers cytosolic calcium. May stimulate a membrane Ca(2+)-ATPase and a 3',5'-cyclic nucleotide phosphodiesterase.</text>
</comment>
<comment type="subunit">
    <text evidence="2">Interacts with RANBP9.</text>
</comment>
<comment type="tissue specificity">
    <text evidence="4">Expressed in the modiolar nerve root and in bushy neurons in the ventral cochlear nucleus (at protein level).</text>
</comment>
<comment type="domain">
    <text evidence="2">This protein has four functional calcium-binding sites; potential sites II and VI have lost affinity for calcium.</text>
</comment>
<comment type="similarity">
    <text evidence="5">Belongs to the calbindin family.</text>
</comment>
<evidence type="ECO:0000250" key="1">
    <source>
        <dbReference type="UniProtKB" id="P04467"/>
    </source>
</evidence>
<evidence type="ECO:0000250" key="2">
    <source>
        <dbReference type="UniProtKB" id="P05937"/>
    </source>
</evidence>
<evidence type="ECO:0000255" key="3">
    <source>
        <dbReference type="PROSITE-ProRule" id="PRU00448"/>
    </source>
</evidence>
<evidence type="ECO:0000269" key="4">
    <source>
    </source>
</evidence>
<evidence type="ECO:0000305" key="5"/>
<keyword id="KW-0007">Acetylation</keyword>
<keyword id="KW-0106">Calcium</keyword>
<keyword id="KW-0903">Direct protein sequencing</keyword>
<keyword id="KW-0479">Metal-binding</keyword>
<keyword id="KW-1185">Reference proteome</keyword>
<keyword id="KW-0677">Repeat</keyword>
<keyword id="KW-0848">Vitamin D</keyword>
<gene>
    <name type="primary">Calb1</name>
</gene>
<sequence>MAESHLQSSLITASQFFEIWLHFDADGSGYLEGKELQNLIQELLQARKKAGLELSPEMKSFVDQYGQRDDGKIGIVELAHVLPTEENFLLLFRCQQLKSCEEFMKTWRKYDTDHSGFIETEELKNFLKDLLEKANKTVDDTKLAEYTDLMLKLFDSNNDGKLELTEMARLLPVQENFLLKFQGIKMCGKEFNKAFELYDQDGNGYIDENELDALLKDLCEKNKQELDINNITTYKKNIMALSDGGKLYRTDLALILSAGDN</sequence>
<reference key="1">
    <citation type="journal article" date="1988" name="J. Neurosci.">
        <title>cDNA cloning and characterization of three genes uniquely expressed in cerebellum by Purkinje neurons.</title>
        <authorList>
            <person name="Nordquist D.T."/>
            <person name="Kozak C.A."/>
            <person name="Orr H.T."/>
        </authorList>
    </citation>
    <scope>NUCLEOTIDE SEQUENCE [MRNA]</scope>
    <source>
        <strain>C57BL/6J</strain>
    </source>
</reference>
<reference key="2">
    <citation type="journal article" date="1994" name="Biochem. Biophys. Res. Commun.">
        <title>Organization and expression of the mouse spot35/calbindin-D28k gene: identification of the vitamin D-responsive promoter region.</title>
        <authorList>
            <person name="Takeda T."/>
            <person name="Arakawa M."/>
            <person name="Kuwano R."/>
        </authorList>
    </citation>
    <scope>NUCLEOTIDE SEQUENCE [GENOMIC DNA]</scope>
    <source>
        <strain>BALB/cJ</strain>
        <tissue>Liver</tissue>
    </source>
</reference>
<reference key="3">
    <citation type="journal article" date="2005" name="Science">
        <title>The transcriptional landscape of the mammalian genome.</title>
        <authorList>
            <person name="Carninci P."/>
            <person name="Kasukawa T."/>
            <person name="Katayama S."/>
            <person name="Gough J."/>
            <person name="Frith M.C."/>
            <person name="Maeda N."/>
            <person name="Oyama R."/>
            <person name="Ravasi T."/>
            <person name="Lenhard B."/>
            <person name="Wells C."/>
            <person name="Kodzius R."/>
            <person name="Shimokawa K."/>
            <person name="Bajic V.B."/>
            <person name="Brenner S.E."/>
            <person name="Batalov S."/>
            <person name="Forrest A.R."/>
            <person name="Zavolan M."/>
            <person name="Davis M.J."/>
            <person name="Wilming L.G."/>
            <person name="Aidinis V."/>
            <person name="Allen J.E."/>
            <person name="Ambesi-Impiombato A."/>
            <person name="Apweiler R."/>
            <person name="Aturaliya R.N."/>
            <person name="Bailey T.L."/>
            <person name="Bansal M."/>
            <person name="Baxter L."/>
            <person name="Beisel K.W."/>
            <person name="Bersano T."/>
            <person name="Bono H."/>
            <person name="Chalk A.M."/>
            <person name="Chiu K.P."/>
            <person name="Choudhary V."/>
            <person name="Christoffels A."/>
            <person name="Clutterbuck D.R."/>
            <person name="Crowe M.L."/>
            <person name="Dalla E."/>
            <person name="Dalrymple B.P."/>
            <person name="de Bono B."/>
            <person name="Della Gatta G."/>
            <person name="di Bernardo D."/>
            <person name="Down T."/>
            <person name="Engstrom P."/>
            <person name="Fagiolini M."/>
            <person name="Faulkner G."/>
            <person name="Fletcher C.F."/>
            <person name="Fukushima T."/>
            <person name="Furuno M."/>
            <person name="Futaki S."/>
            <person name="Gariboldi M."/>
            <person name="Georgii-Hemming P."/>
            <person name="Gingeras T.R."/>
            <person name="Gojobori T."/>
            <person name="Green R.E."/>
            <person name="Gustincich S."/>
            <person name="Harbers M."/>
            <person name="Hayashi Y."/>
            <person name="Hensch T.K."/>
            <person name="Hirokawa N."/>
            <person name="Hill D."/>
            <person name="Huminiecki L."/>
            <person name="Iacono M."/>
            <person name="Ikeo K."/>
            <person name="Iwama A."/>
            <person name="Ishikawa T."/>
            <person name="Jakt M."/>
            <person name="Kanapin A."/>
            <person name="Katoh M."/>
            <person name="Kawasawa Y."/>
            <person name="Kelso J."/>
            <person name="Kitamura H."/>
            <person name="Kitano H."/>
            <person name="Kollias G."/>
            <person name="Krishnan S.P."/>
            <person name="Kruger A."/>
            <person name="Kummerfeld S.K."/>
            <person name="Kurochkin I.V."/>
            <person name="Lareau L.F."/>
            <person name="Lazarevic D."/>
            <person name="Lipovich L."/>
            <person name="Liu J."/>
            <person name="Liuni S."/>
            <person name="McWilliam S."/>
            <person name="Madan Babu M."/>
            <person name="Madera M."/>
            <person name="Marchionni L."/>
            <person name="Matsuda H."/>
            <person name="Matsuzawa S."/>
            <person name="Miki H."/>
            <person name="Mignone F."/>
            <person name="Miyake S."/>
            <person name="Morris K."/>
            <person name="Mottagui-Tabar S."/>
            <person name="Mulder N."/>
            <person name="Nakano N."/>
            <person name="Nakauchi H."/>
            <person name="Ng P."/>
            <person name="Nilsson R."/>
            <person name="Nishiguchi S."/>
            <person name="Nishikawa S."/>
            <person name="Nori F."/>
            <person name="Ohara O."/>
            <person name="Okazaki Y."/>
            <person name="Orlando V."/>
            <person name="Pang K.C."/>
            <person name="Pavan W.J."/>
            <person name="Pavesi G."/>
            <person name="Pesole G."/>
            <person name="Petrovsky N."/>
            <person name="Piazza S."/>
            <person name="Reed J."/>
            <person name="Reid J.F."/>
            <person name="Ring B.Z."/>
            <person name="Ringwald M."/>
            <person name="Rost B."/>
            <person name="Ruan Y."/>
            <person name="Salzberg S.L."/>
            <person name="Sandelin A."/>
            <person name="Schneider C."/>
            <person name="Schoenbach C."/>
            <person name="Sekiguchi K."/>
            <person name="Semple C.A."/>
            <person name="Seno S."/>
            <person name="Sessa L."/>
            <person name="Sheng Y."/>
            <person name="Shibata Y."/>
            <person name="Shimada H."/>
            <person name="Shimada K."/>
            <person name="Silva D."/>
            <person name="Sinclair B."/>
            <person name="Sperling S."/>
            <person name="Stupka E."/>
            <person name="Sugiura K."/>
            <person name="Sultana R."/>
            <person name="Takenaka Y."/>
            <person name="Taki K."/>
            <person name="Tammoja K."/>
            <person name="Tan S.L."/>
            <person name="Tang S."/>
            <person name="Taylor M.S."/>
            <person name="Tegner J."/>
            <person name="Teichmann S.A."/>
            <person name="Ueda H.R."/>
            <person name="van Nimwegen E."/>
            <person name="Verardo R."/>
            <person name="Wei C.L."/>
            <person name="Yagi K."/>
            <person name="Yamanishi H."/>
            <person name="Zabarovsky E."/>
            <person name="Zhu S."/>
            <person name="Zimmer A."/>
            <person name="Hide W."/>
            <person name="Bult C."/>
            <person name="Grimmond S.M."/>
            <person name="Teasdale R.D."/>
            <person name="Liu E.T."/>
            <person name="Brusic V."/>
            <person name="Quackenbush J."/>
            <person name="Wahlestedt C."/>
            <person name="Mattick J.S."/>
            <person name="Hume D.A."/>
            <person name="Kai C."/>
            <person name="Sasaki D."/>
            <person name="Tomaru Y."/>
            <person name="Fukuda S."/>
            <person name="Kanamori-Katayama M."/>
            <person name="Suzuki M."/>
            <person name="Aoki J."/>
            <person name="Arakawa T."/>
            <person name="Iida J."/>
            <person name="Imamura K."/>
            <person name="Itoh M."/>
            <person name="Kato T."/>
            <person name="Kawaji H."/>
            <person name="Kawagashira N."/>
            <person name="Kawashima T."/>
            <person name="Kojima M."/>
            <person name="Kondo S."/>
            <person name="Konno H."/>
            <person name="Nakano K."/>
            <person name="Ninomiya N."/>
            <person name="Nishio T."/>
            <person name="Okada M."/>
            <person name="Plessy C."/>
            <person name="Shibata K."/>
            <person name="Shiraki T."/>
            <person name="Suzuki S."/>
            <person name="Tagami M."/>
            <person name="Waki K."/>
            <person name="Watahiki A."/>
            <person name="Okamura-Oho Y."/>
            <person name="Suzuki H."/>
            <person name="Kawai J."/>
            <person name="Hayashizaki Y."/>
        </authorList>
    </citation>
    <scope>NUCLEOTIDE SEQUENCE [LARGE SCALE MRNA]</scope>
    <source>
        <strain>C57BL/6J</strain>
        <tissue>Cerebellum</tissue>
        <tissue>Head</tissue>
        <tissue>Kidney</tissue>
    </source>
</reference>
<reference key="4">
    <citation type="journal article" date="2004" name="Genome Res.">
        <title>The status, quality, and expansion of the NIH full-length cDNA project: the Mammalian Gene Collection (MGC).</title>
        <authorList>
            <consortium name="The MGC Project Team"/>
        </authorList>
    </citation>
    <scope>NUCLEOTIDE SEQUENCE [LARGE SCALE MRNA]</scope>
    <source>
        <tissue>Eye</tissue>
    </source>
</reference>
<reference key="5">
    <citation type="submission" date="2007-04" db="UniProtKB">
        <authorList>
            <person name="Lubec G."/>
            <person name="Kang S.U."/>
        </authorList>
    </citation>
    <scope>PROTEIN SEQUENCE OF 35-47; 170-180; 222-235 AND 237-246</scope>
    <scope>IDENTIFICATION BY MASS SPECTROMETRY</scope>
    <source>
        <strain>C57BL/6J</strain>
        <tissue>Brain</tissue>
    </source>
</reference>
<reference key="6">
    <citation type="journal article" date="1988" name="DNA">
        <title>Molecular cloning of mammalian 28,000 Mr vitamin D-dependent calcium binding protein (calbindin-D28K): expression of calbindin-D28K RNAs in rodent brain and kidney.</title>
        <authorList>
            <person name="Wood T.L."/>
            <person name="Kobayashi Y."/>
            <person name="Frantz G."/>
            <person name="Varghese S."/>
            <person name="Christakos S."/>
            <person name="Tobin A.J."/>
        </authorList>
    </citation>
    <scope>NUCLEOTIDE SEQUENCE [MRNA] OF 102-261</scope>
</reference>
<reference key="7">
    <citation type="journal article" date="2008" name="Mol. Cell. Neurosci.">
        <title>Math5 expression and function in the central auditory system.</title>
        <authorList>
            <person name="Saul S.M."/>
            <person name="Brzezinski J.A. IV"/>
            <person name="Altschuler R.A."/>
            <person name="Shore S.E."/>
            <person name="Rudolph D.D."/>
            <person name="Kabara L.L."/>
            <person name="Halsey K.E."/>
            <person name="Hufnagel R.B."/>
            <person name="Zhou J."/>
            <person name="Dolan D.F."/>
            <person name="Glaser T."/>
        </authorList>
    </citation>
    <scope>TISSUE SPECIFICITY</scope>
</reference>
<reference key="8">
    <citation type="journal article" date="2010" name="Cell">
        <title>A tissue-specific atlas of mouse protein phosphorylation and expression.</title>
        <authorList>
            <person name="Huttlin E.L."/>
            <person name="Jedrychowski M.P."/>
            <person name="Elias J.E."/>
            <person name="Goswami T."/>
            <person name="Rad R."/>
            <person name="Beausoleil S.A."/>
            <person name="Villen J."/>
            <person name="Haas W."/>
            <person name="Sowa M.E."/>
            <person name="Gygi S.P."/>
        </authorList>
    </citation>
    <scope>IDENTIFICATION BY MASS SPECTROMETRY [LARGE SCALE ANALYSIS]</scope>
    <source>
        <tissue>Brain</tissue>
        <tissue>Kidney</tissue>
        <tissue>Liver</tissue>
    </source>
</reference>
<dbReference type="EMBL" id="M21531">
    <property type="protein sequence ID" value="AAA39898.1"/>
    <property type="molecule type" value="mRNA"/>
</dbReference>
<dbReference type="EMBL" id="D26352">
    <property type="protein sequence ID" value="BAA05386.1"/>
    <property type="molecule type" value="Genomic_DNA"/>
</dbReference>
<dbReference type="EMBL" id="AK002635">
    <property type="protein sequence ID" value="BAB22249.1"/>
    <property type="molecule type" value="mRNA"/>
</dbReference>
<dbReference type="EMBL" id="AK005081">
    <property type="protein sequence ID" value="BAB23805.1"/>
    <property type="molecule type" value="mRNA"/>
</dbReference>
<dbReference type="EMBL" id="AK005243">
    <property type="protein sequence ID" value="BAB23900.1"/>
    <property type="molecule type" value="mRNA"/>
</dbReference>
<dbReference type="EMBL" id="AK028050">
    <property type="protein sequence ID" value="BAC25721.1"/>
    <property type="molecule type" value="mRNA"/>
</dbReference>
<dbReference type="EMBL" id="AK048517">
    <property type="protein sequence ID" value="BAC33354.1"/>
    <property type="molecule type" value="mRNA"/>
</dbReference>
<dbReference type="EMBL" id="AK077499">
    <property type="protein sequence ID" value="BAC36831.1"/>
    <property type="molecule type" value="mRNA"/>
</dbReference>
<dbReference type="EMBL" id="BC016421">
    <property type="protein sequence ID" value="AAH16421.1"/>
    <property type="molecule type" value="mRNA"/>
</dbReference>
<dbReference type="EMBL" id="M23663">
    <property type="protein sequence ID" value="AAA53198.1"/>
    <property type="molecule type" value="mRNA"/>
</dbReference>
<dbReference type="CCDS" id="CCDS17984.1"/>
<dbReference type="PIR" id="A34955">
    <property type="entry name" value="A34955"/>
</dbReference>
<dbReference type="RefSeq" id="NP_033918.1">
    <property type="nucleotide sequence ID" value="NM_009788.4"/>
</dbReference>
<dbReference type="SMR" id="P12658"/>
<dbReference type="BioGRID" id="198449">
    <property type="interactions" value="6"/>
</dbReference>
<dbReference type="FunCoup" id="P12658">
    <property type="interactions" value="409"/>
</dbReference>
<dbReference type="IntAct" id="P12658">
    <property type="interactions" value="3"/>
</dbReference>
<dbReference type="MINT" id="P12658"/>
<dbReference type="STRING" id="10090.ENSMUSP00000029876"/>
<dbReference type="GlyGen" id="P12658">
    <property type="glycosylation" value="1 site, 1 N-linked glycan (1 site)"/>
</dbReference>
<dbReference type="iPTMnet" id="P12658"/>
<dbReference type="PhosphoSitePlus" id="P12658"/>
<dbReference type="SwissPalm" id="P12658"/>
<dbReference type="jPOST" id="P12658"/>
<dbReference type="PaxDb" id="10090-ENSMUSP00000029876"/>
<dbReference type="PeptideAtlas" id="P12658"/>
<dbReference type="ProteomicsDB" id="273829"/>
<dbReference type="ABCD" id="P12658">
    <property type="antibodies" value="2 sequenced antibodies"/>
</dbReference>
<dbReference type="Antibodypedia" id="3678">
    <property type="antibodies" value="508 antibodies from 44 providers"/>
</dbReference>
<dbReference type="DNASU" id="12307"/>
<dbReference type="Ensembl" id="ENSMUST00000029876.2">
    <property type="protein sequence ID" value="ENSMUSP00000029876.2"/>
    <property type="gene ID" value="ENSMUSG00000028222.3"/>
</dbReference>
<dbReference type="GeneID" id="12307"/>
<dbReference type="KEGG" id="mmu:12307"/>
<dbReference type="UCSC" id="uc008sbl.1">
    <property type="organism name" value="mouse"/>
</dbReference>
<dbReference type="AGR" id="MGI:88248"/>
<dbReference type="CTD" id="793"/>
<dbReference type="MGI" id="MGI:88248">
    <property type="gene designation" value="Calb1"/>
</dbReference>
<dbReference type="VEuPathDB" id="HostDB:ENSMUSG00000028222"/>
<dbReference type="eggNOG" id="KOG0027">
    <property type="taxonomic scope" value="Eukaryota"/>
</dbReference>
<dbReference type="GeneTree" id="ENSGT00950000183108"/>
<dbReference type="HOGENOM" id="CLU_054826_1_1_1"/>
<dbReference type="InParanoid" id="P12658"/>
<dbReference type="OMA" id="WLHFDSD"/>
<dbReference type="OrthoDB" id="428774at2759"/>
<dbReference type="PhylomeDB" id="P12658"/>
<dbReference type="TreeFam" id="TF325083"/>
<dbReference type="BioGRID-ORCS" id="12307">
    <property type="hits" value="0 hits in 78 CRISPR screens"/>
</dbReference>
<dbReference type="PRO" id="PR:P12658"/>
<dbReference type="Proteomes" id="UP000000589">
    <property type="component" value="Chromosome 4"/>
</dbReference>
<dbReference type="RNAct" id="P12658">
    <property type="molecule type" value="protein"/>
</dbReference>
<dbReference type="Bgee" id="ENSMUSG00000028222">
    <property type="expression patterns" value="Expressed in molar tooth and 162 other cell types or tissues"/>
</dbReference>
<dbReference type="GO" id="GO:0030424">
    <property type="term" value="C:axon"/>
    <property type="evidence" value="ECO:0000314"/>
    <property type="project" value="BHF-UCL"/>
</dbReference>
<dbReference type="GO" id="GO:0044305">
    <property type="term" value="C:calyx of Held"/>
    <property type="evidence" value="ECO:0007669"/>
    <property type="project" value="Ensembl"/>
</dbReference>
<dbReference type="GO" id="GO:0032437">
    <property type="term" value="C:cuticular plate"/>
    <property type="evidence" value="ECO:0007669"/>
    <property type="project" value="Ensembl"/>
</dbReference>
<dbReference type="GO" id="GO:0005737">
    <property type="term" value="C:cytoplasm"/>
    <property type="evidence" value="ECO:0000314"/>
    <property type="project" value="MGI"/>
</dbReference>
<dbReference type="GO" id="GO:0005829">
    <property type="term" value="C:cytosol"/>
    <property type="evidence" value="ECO:0000314"/>
    <property type="project" value="MGI"/>
</dbReference>
<dbReference type="GO" id="GO:0030425">
    <property type="term" value="C:dendrite"/>
    <property type="evidence" value="ECO:0000314"/>
    <property type="project" value="MGI"/>
</dbReference>
<dbReference type="GO" id="GO:0098982">
    <property type="term" value="C:GABA-ergic synapse"/>
    <property type="evidence" value="ECO:0000314"/>
    <property type="project" value="SynGO"/>
</dbReference>
<dbReference type="GO" id="GO:0098978">
    <property type="term" value="C:glutamatergic synapse"/>
    <property type="evidence" value="ECO:0000314"/>
    <property type="project" value="SynGO"/>
</dbReference>
<dbReference type="GO" id="GO:0098686">
    <property type="term" value="C:hippocampal mossy fiber to CA3 synapse"/>
    <property type="evidence" value="ECO:0000314"/>
    <property type="project" value="SynGO"/>
</dbReference>
<dbReference type="GO" id="GO:0043005">
    <property type="term" value="C:neuron projection"/>
    <property type="evidence" value="ECO:0000314"/>
    <property type="project" value="MGI"/>
</dbReference>
<dbReference type="GO" id="GO:0043025">
    <property type="term" value="C:neuronal cell body"/>
    <property type="evidence" value="ECO:0000314"/>
    <property type="project" value="MGI"/>
</dbReference>
<dbReference type="GO" id="GO:0005634">
    <property type="term" value="C:nucleus"/>
    <property type="evidence" value="ECO:0000314"/>
    <property type="project" value="UniProtKB"/>
</dbReference>
<dbReference type="GO" id="GO:0099524">
    <property type="term" value="C:postsynaptic cytosol"/>
    <property type="evidence" value="ECO:0007669"/>
    <property type="project" value="Ensembl"/>
</dbReference>
<dbReference type="GO" id="GO:0099523">
    <property type="term" value="C:presynaptic cytosol"/>
    <property type="evidence" value="ECO:0007669"/>
    <property type="project" value="Ensembl"/>
</dbReference>
<dbReference type="GO" id="GO:0032420">
    <property type="term" value="C:stereocilium"/>
    <property type="evidence" value="ECO:0007669"/>
    <property type="project" value="Ensembl"/>
</dbReference>
<dbReference type="GO" id="GO:0045202">
    <property type="term" value="C:synapse"/>
    <property type="evidence" value="ECO:0000314"/>
    <property type="project" value="MGI"/>
</dbReference>
<dbReference type="GO" id="GO:0099567">
    <property type="term" value="F:calcium ion binding involved in regulation of postsynaptic cytosolic calcium ion concentration"/>
    <property type="evidence" value="ECO:0000314"/>
    <property type="project" value="SynGO"/>
</dbReference>
<dbReference type="GO" id="GO:0099534">
    <property type="term" value="F:calcium ion binding involved in regulation of presynaptic cytosolic calcium ion concentration"/>
    <property type="evidence" value="ECO:0000314"/>
    <property type="project" value="SynGO"/>
</dbReference>
<dbReference type="GO" id="GO:0005499">
    <property type="term" value="F:vitamin D binding"/>
    <property type="evidence" value="ECO:0007669"/>
    <property type="project" value="UniProtKB-KW"/>
</dbReference>
<dbReference type="GO" id="GO:0008270">
    <property type="term" value="F:zinc ion binding"/>
    <property type="evidence" value="ECO:0007669"/>
    <property type="project" value="Ensembl"/>
</dbReference>
<dbReference type="GO" id="GO:0090102">
    <property type="term" value="P:cochlea development"/>
    <property type="evidence" value="ECO:0007669"/>
    <property type="project" value="Ensembl"/>
</dbReference>
<dbReference type="GO" id="GO:0007626">
    <property type="term" value="P:locomotory behavior"/>
    <property type="evidence" value="ECO:0000315"/>
    <property type="project" value="MGI"/>
</dbReference>
<dbReference type="GO" id="GO:0007616">
    <property type="term" value="P:long-term memory"/>
    <property type="evidence" value="ECO:0007669"/>
    <property type="project" value="Ensembl"/>
</dbReference>
<dbReference type="GO" id="GO:0072205">
    <property type="term" value="P:metanephric collecting duct development"/>
    <property type="evidence" value="ECO:0000270"/>
    <property type="project" value="UniProtKB"/>
</dbReference>
<dbReference type="GO" id="GO:0072286">
    <property type="term" value="P:metanephric connecting tubule development"/>
    <property type="evidence" value="ECO:0000270"/>
    <property type="project" value="UniProtKB"/>
</dbReference>
<dbReference type="GO" id="GO:0072221">
    <property type="term" value="P:metanephric distal convoluted tubule development"/>
    <property type="evidence" value="ECO:0000270"/>
    <property type="project" value="UniProtKB"/>
</dbReference>
<dbReference type="GO" id="GO:0035502">
    <property type="term" value="P:metanephric part of ureteric bud development"/>
    <property type="evidence" value="ECO:0000270"/>
    <property type="project" value="UniProtKB"/>
</dbReference>
<dbReference type="GO" id="GO:0048167">
    <property type="term" value="P:regulation of synaptic plasticity"/>
    <property type="evidence" value="ECO:0007669"/>
    <property type="project" value="Ensembl"/>
</dbReference>
<dbReference type="GO" id="GO:0010996">
    <property type="term" value="P:response to auditory stimulus"/>
    <property type="evidence" value="ECO:0007669"/>
    <property type="project" value="Ensembl"/>
</dbReference>
<dbReference type="GO" id="GO:0060041">
    <property type="term" value="P:retina development in camera-type eye"/>
    <property type="evidence" value="ECO:0000270"/>
    <property type="project" value="UniProtKB"/>
</dbReference>
<dbReference type="GO" id="GO:0010842">
    <property type="term" value="P:retina layer formation"/>
    <property type="evidence" value="ECO:0000270"/>
    <property type="project" value="UniProtKB"/>
</dbReference>
<dbReference type="GO" id="GO:0007614">
    <property type="term" value="P:short-term memory"/>
    <property type="evidence" value="ECO:0007669"/>
    <property type="project" value="Ensembl"/>
</dbReference>
<dbReference type="FunFam" id="1.10.238.10:FF:000108">
    <property type="entry name" value="Calbindin 1"/>
    <property type="match status" value="1"/>
</dbReference>
<dbReference type="FunFam" id="1.10.238.10:FF:000147">
    <property type="entry name" value="Calbindin 1"/>
    <property type="match status" value="1"/>
</dbReference>
<dbReference type="FunFam" id="1.10.238.10:FF:000054">
    <property type="entry name" value="Calbindin 2"/>
    <property type="match status" value="1"/>
</dbReference>
<dbReference type="Gene3D" id="1.10.238.10">
    <property type="entry name" value="EF-hand"/>
    <property type="match status" value="3"/>
</dbReference>
<dbReference type="InterPro" id="IPR051001">
    <property type="entry name" value="Calbindin_Ca-bind"/>
</dbReference>
<dbReference type="InterPro" id="IPR011992">
    <property type="entry name" value="EF-hand-dom_pair"/>
</dbReference>
<dbReference type="InterPro" id="IPR018247">
    <property type="entry name" value="EF_Hand_1_Ca_BS"/>
</dbReference>
<dbReference type="InterPro" id="IPR002048">
    <property type="entry name" value="EF_hand_dom"/>
</dbReference>
<dbReference type="PANTHER" id="PTHR19972">
    <property type="entry name" value="CALBINDIN"/>
    <property type="match status" value="1"/>
</dbReference>
<dbReference type="PANTHER" id="PTHR19972:SF14">
    <property type="entry name" value="CALBINDIN"/>
    <property type="match status" value="1"/>
</dbReference>
<dbReference type="Pfam" id="PF00036">
    <property type="entry name" value="EF-hand_1"/>
    <property type="match status" value="1"/>
</dbReference>
<dbReference type="Pfam" id="PF13499">
    <property type="entry name" value="EF-hand_7"/>
    <property type="match status" value="1"/>
</dbReference>
<dbReference type="SMART" id="SM00054">
    <property type="entry name" value="EFh"/>
    <property type="match status" value="4"/>
</dbReference>
<dbReference type="SUPFAM" id="SSF47473">
    <property type="entry name" value="EF-hand"/>
    <property type="match status" value="2"/>
</dbReference>
<dbReference type="PROSITE" id="PS00018">
    <property type="entry name" value="EF_HAND_1"/>
    <property type="match status" value="4"/>
</dbReference>
<dbReference type="PROSITE" id="PS50222">
    <property type="entry name" value="EF_HAND_2"/>
    <property type="match status" value="5"/>
</dbReference>
<organism>
    <name type="scientific">Mus musculus</name>
    <name type="common">Mouse</name>
    <dbReference type="NCBI Taxonomy" id="10090"/>
    <lineage>
        <taxon>Eukaryota</taxon>
        <taxon>Metazoa</taxon>
        <taxon>Chordata</taxon>
        <taxon>Craniata</taxon>
        <taxon>Vertebrata</taxon>
        <taxon>Euteleostomi</taxon>
        <taxon>Mammalia</taxon>
        <taxon>Eutheria</taxon>
        <taxon>Euarchontoglires</taxon>
        <taxon>Glires</taxon>
        <taxon>Rodentia</taxon>
        <taxon>Myomorpha</taxon>
        <taxon>Muroidea</taxon>
        <taxon>Muridae</taxon>
        <taxon>Murinae</taxon>
        <taxon>Mus</taxon>
        <taxon>Mus</taxon>
    </lineage>
</organism>
<proteinExistence type="evidence at protein level"/>
<name>CALB1_MOUSE</name>
<protein>
    <recommendedName>
        <fullName>Calbindin</fullName>
    </recommendedName>
    <alternativeName>
        <fullName>Calbindin D28</fullName>
    </alternativeName>
    <alternativeName>
        <fullName>D-28K</fullName>
    </alternativeName>
    <alternativeName>
        <fullName>PCD-29</fullName>
    </alternativeName>
    <alternativeName>
        <fullName>Spot 35 protein</fullName>
    </alternativeName>
    <alternativeName>
        <fullName>Vitamin D-dependent calcium-binding protein, avian-type</fullName>
    </alternativeName>
</protein>